<reference key="1">
    <citation type="journal article" date="2010" name="Genome Biol.">
        <title>Structure and dynamics of the pan-genome of Streptococcus pneumoniae and closely related species.</title>
        <authorList>
            <person name="Donati C."/>
            <person name="Hiller N.L."/>
            <person name="Tettelin H."/>
            <person name="Muzzi A."/>
            <person name="Croucher N.J."/>
            <person name="Angiuoli S.V."/>
            <person name="Oggioni M."/>
            <person name="Dunning Hotopp J.C."/>
            <person name="Hu F.Z."/>
            <person name="Riley D.R."/>
            <person name="Covacci A."/>
            <person name="Mitchell T.J."/>
            <person name="Bentley S.D."/>
            <person name="Kilian M."/>
            <person name="Ehrlich G.D."/>
            <person name="Rappuoli R."/>
            <person name="Moxon E.R."/>
            <person name="Masignani V."/>
        </authorList>
    </citation>
    <scope>NUCLEOTIDE SEQUENCE [LARGE SCALE GENOMIC DNA]</scope>
    <source>
        <strain>P1031</strain>
    </source>
</reference>
<keyword id="KW-0067">ATP-binding</keyword>
<keyword id="KW-0143">Chaperone</keyword>
<keyword id="KW-0479">Metal-binding</keyword>
<keyword id="KW-0547">Nucleotide-binding</keyword>
<keyword id="KW-0862">Zinc</keyword>
<sequence>MSTNRKNDMMVYCSFCGKNQEEVQKIIAGNNAFICNECVELAQEIIREELVEEVLADLSEVPKPIELLHILNHYVIGQDRAKRALAVAVYNHYKRINFHDTREESEDVDLQKSNILMIGPTGSGKTFLAQTLAKSLNVPFAIADATALTEAGYVGEDVENILLKLLQVADFNIERAERGIIYVDEIDKIAKKSENVSITRDVSGEGVQQALLKIIEGTVASVPPQGGRKHPQQEMIQVDTKNILFIVGGAFDGIEEIVKQRLGEKVIGFGQNNKAIDENSSYMQEIIAEDIQKFGIIPELIGRLPVFAALEQLTVDDLVRILKEPRNALVKQYQTLLSYDDVELEFDDEALQEIANKAIERKTGARGLRSIIEETMLDVMFEVPSQENVKLVRITKETVDGTDKPILETA</sequence>
<protein>
    <recommendedName>
        <fullName evidence="1">ATP-dependent Clp protease ATP-binding subunit ClpX</fullName>
    </recommendedName>
</protein>
<comment type="function">
    <text evidence="1">ATP-dependent specificity component of the Clp protease. It directs the protease to specific substrates. Can perform chaperone functions in the absence of ClpP.</text>
</comment>
<comment type="subunit">
    <text evidence="1">Component of the ClpX-ClpP complex. Forms a hexameric ring that, in the presence of ATP, binds to fourteen ClpP subunits assembled into a disk-like structure with a central cavity, resembling the structure of eukaryotic proteasomes.</text>
</comment>
<comment type="similarity">
    <text evidence="1">Belongs to the ClpX chaperone family.</text>
</comment>
<feature type="chain" id="PRO_1000123856" description="ATP-dependent Clp protease ATP-binding subunit ClpX">
    <location>
        <begin position="1"/>
        <end position="410"/>
    </location>
</feature>
<feature type="domain" description="ClpX-type ZB" evidence="2">
    <location>
        <begin position="1"/>
        <end position="54"/>
    </location>
</feature>
<feature type="binding site" evidence="2">
    <location>
        <position position="13"/>
    </location>
    <ligand>
        <name>Zn(2+)</name>
        <dbReference type="ChEBI" id="CHEBI:29105"/>
    </ligand>
</feature>
<feature type="binding site" evidence="2">
    <location>
        <position position="16"/>
    </location>
    <ligand>
        <name>Zn(2+)</name>
        <dbReference type="ChEBI" id="CHEBI:29105"/>
    </ligand>
</feature>
<feature type="binding site" evidence="2">
    <location>
        <position position="35"/>
    </location>
    <ligand>
        <name>Zn(2+)</name>
        <dbReference type="ChEBI" id="CHEBI:29105"/>
    </ligand>
</feature>
<feature type="binding site" evidence="2">
    <location>
        <position position="38"/>
    </location>
    <ligand>
        <name>Zn(2+)</name>
        <dbReference type="ChEBI" id="CHEBI:29105"/>
    </ligand>
</feature>
<feature type="binding site" evidence="1">
    <location>
        <begin position="120"/>
        <end position="127"/>
    </location>
    <ligand>
        <name>ATP</name>
        <dbReference type="ChEBI" id="CHEBI:30616"/>
    </ligand>
</feature>
<accession>C1CLR8</accession>
<organism>
    <name type="scientific">Streptococcus pneumoniae (strain P1031)</name>
    <dbReference type="NCBI Taxonomy" id="488223"/>
    <lineage>
        <taxon>Bacteria</taxon>
        <taxon>Bacillati</taxon>
        <taxon>Bacillota</taxon>
        <taxon>Bacilli</taxon>
        <taxon>Lactobacillales</taxon>
        <taxon>Streptococcaceae</taxon>
        <taxon>Streptococcus</taxon>
    </lineage>
</organism>
<evidence type="ECO:0000255" key="1">
    <source>
        <dbReference type="HAMAP-Rule" id="MF_00175"/>
    </source>
</evidence>
<evidence type="ECO:0000255" key="2">
    <source>
        <dbReference type="PROSITE-ProRule" id="PRU01250"/>
    </source>
</evidence>
<proteinExistence type="inferred from homology"/>
<gene>
    <name evidence="1" type="primary">clpX</name>
    <name type="ordered locus">SPP_1592</name>
</gene>
<dbReference type="EMBL" id="CP000920">
    <property type="protein sequence ID" value="ACO21086.1"/>
    <property type="molecule type" value="Genomic_DNA"/>
</dbReference>
<dbReference type="RefSeq" id="WP_000106346.1">
    <property type="nucleotide sequence ID" value="NC_012467.1"/>
</dbReference>
<dbReference type="SMR" id="C1CLR8"/>
<dbReference type="GeneID" id="45653193"/>
<dbReference type="KEGG" id="spp:SPP_1592"/>
<dbReference type="HOGENOM" id="CLU_014218_8_2_9"/>
<dbReference type="GO" id="GO:0009376">
    <property type="term" value="C:HslUV protease complex"/>
    <property type="evidence" value="ECO:0007669"/>
    <property type="project" value="TreeGrafter"/>
</dbReference>
<dbReference type="GO" id="GO:0005524">
    <property type="term" value="F:ATP binding"/>
    <property type="evidence" value="ECO:0007669"/>
    <property type="project" value="UniProtKB-UniRule"/>
</dbReference>
<dbReference type="GO" id="GO:0016887">
    <property type="term" value="F:ATP hydrolysis activity"/>
    <property type="evidence" value="ECO:0007669"/>
    <property type="project" value="InterPro"/>
</dbReference>
<dbReference type="GO" id="GO:0140662">
    <property type="term" value="F:ATP-dependent protein folding chaperone"/>
    <property type="evidence" value="ECO:0007669"/>
    <property type="project" value="InterPro"/>
</dbReference>
<dbReference type="GO" id="GO:0046983">
    <property type="term" value="F:protein dimerization activity"/>
    <property type="evidence" value="ECO:0007669"/>
    <property type="project" value="InterPro"/>
</dbReference>
<dbReference type="GO" id="GO:0051082">
    <property type="term" value="F:unfolded protein binding"/>
    <property type="evidence" value="ECO:0007669"/>
    <property type="project" value="UniProtKB-UniRule"/>
</dbReference>
<dbReference type="GO" id="GO:0008270">
    <property type="term" value="F:zinc ion binding"/>
    <property type="evidence" value="ECO:0007669"/>
    <property type="project" value="InterPro"/>
</dbReference>
<dbReference type="GO" id="GO:0051301">
    <property type="term" value="P:cell division"/>
    <property type="evidence" value="ECO:0007669"/>
    <property type="project" value="TreeGrafter"/>
</dbReference>
<dbReference type="GO" id="GO:0051603">
    <property type="term" value="P:proteolysis involved in protein catabolic process"/>
    <property type="evidence" value="ECO:0007669"/>
    <property type="project" value="TreeGrafter"/>
</dbReference>
<dbReference type="CDD" id="cd19497">
    <property type="entry name" value="RecA-like_ClpX"/>
    <property type="match status" value="1"/>
</dbReference>
<dbReference type="FunFam" id="1.10.8.60:FF:000002">
    <property type="entry name" value="ATP-dependent Clp protease ATP-binding subunit ClpX"/>
    <property type="match status" value="1"/>
</dbReference>
<dbReference type="FunFam" id="3.40.50.300:FF:000005">
    <property type="entry name" value="ATP-dependent Clp protease ATP-binding subunit ClpX"/>
    <property type="match status" value="1"/>
</dbReference>
<dbReference type="Gene3D" id="1.10.8.60">
    <property type="match status" value="1"/>
</dbReference>
<dbReference type="Gene3D" id="6.20.220.10">
    <property type="entry name" value="ClpX chaperone, C4-type zinc finger domain"/>
    <property type="match status" value="1"/>
</dbReference>
<dbReference type="Gene3D" id="3.40.50.300">
    <property type="entry name" value="P-loop containing nucleotide triphosphate hydrolases"/>
    <property type="match status" value="1"/>
</dbReference>
<dbReference type="HAMAP" id="MF_00175">
    <property type="entry name" value="ClpX"/>
    <property type="match status" value="1"/>
</dbReference>
<dbReference type="InterPro" id="IPR003593">
    <property type="entry name" value="AAA+_ATPase"/>
</dbReference>
<dbReference type="InterPro" id="IPR050052">
    <property type="entry name" value="ATP-dep_Clp_protease_ClpX"/>
</dbReference>
<dbReference type="InterPro" id="IPR003959">
    <property type="entry name" value="ATPase_AAA_core"/>
</dbReference>
<dbReference type="InterPro" id="IPR019489">
    <property type="entry name" value="Clp_ATPase_C"/>
</dbReference>
<dbReference type="InterPro" id="IPR004487">
    <property type="entry name" value="Clp_protease_ATP-bd_su_ClpX"/>
</dbReference>
<dbReference type="InterPro" id="IPR046425">
    <property type="entry name" value="ClpX_bact"/>
</dbReference>
<dbReference type="InterPro" id="IPR027417">
    <property type="entry name" value="P-loop_NTPase"/>
</dbReference>
<dbReference type="InterPro" id="IPR010603">
    <property type="entry name" value="Znf_CppX_C4"/>
</dbReference>
<dbReference type="InterPro" id="IPR038366">
    <property type="entry name" value="Znf_CppX_C4_sf"/>
</dbReference>
<dbReference type="NCBIfam" id="TIGR00382">
    <property type="entry name" value="clpX"/>
    <property type="match status" value="1"/>
</dbReference>
<dbReference type="NCBIfam" id="NF003745">
    <property type="entry name" value="PRK05342.1"/>
    <property type="match status" value="1"/>
</dbReference>
<dbReference type="PANTHER" id="PTHR48102:SF7">
    <property type="entry name" value="ATP-DEPENDENT CLP PROTEASE ATP-BINDING SUBUNIT CLPX-LIKE, MITOCHONDRIAL"/>
    <property type="match status" value="1"/>
</dbReference>
<dbReference type="PANTHER" id="PTHR48102">
    <property type="entry name" value="ATP-DEPENDENT CLP PROTEASE ATP-BINDING SUBUNIT CLPX-LIKE, MITOCHONDRIAL-RELATED"/>
    <property type="match status" value="1"/>
</dbReference>
<dbReference type="Pfam" id="PF07724">
    <property type="entry name" value="AAA_2"/>
    <property type="match status" value="1"/>
</dbReference>
<dbReference type="Pfam" id="PF10431">
    <property type="entry name" value="ClpB_D2-small"/>
    <property type="match status" value="1"/>
</dbReference>
<dbReference type="Pfam" id="PF06689">
    <property type="entry name" value="zf-C4_ClpX"/>
    <property type="match status" value="1"/>
</dbReference>
<dbReference type="SMART" id="SM00382">
    <property type="entry name" value="AAA"/>
    <property type="match status" value="1"/>
</dbReference>
<dbReference type="SMART" id="SM01086">
    <property type="entry name" value="ClpB_D2-small"/>
    <property type="match status" value="1"/>
</dbReference>
<dbReference type="SMART" id="SM00994">
    <property type="entry name" value="zf-C4_ClpX"/>
    <property type="match status" value="1"/>
</dbReference>
<dbReference type="SUPFAM" id="SSF57716">
    <property type="entry name" value="Glucocorticoid receptor-like (DNA-binding domain)"/>
    <property type="match status" value="1"/>
</dbReference>
<dbReference type="SUPFAM" id="SSF52540">
    <property type="entry name" value="P-loop containing nucleoside triphosphate hydrolases"/>
    <property type="match status" value="1"/>
</dbReference>
<dbReference type="PROSITE" id="PS51902">
    <property type="entry name" value="CLPX_ZB"/>
    <property type="match status" value="1"/>
</dbReference>
<name>CLPX_STRZP</name>